<gene>
    <name type="primary">ku70</name>
</gene>
<name>KU70_ASPSO</name>
<keyword id="KW-0067">ATP-binding</keyword>
<keyword id="KW-0158">Chromosome</keyword>
<keyword id="KW-0227">DNA damage</keyword>
<keyword id="KW-0233">DNA recombination</keyword>
<keyword id="KW-0234">DNA repair</keyword>
<keyword id="KW-0238">DNA-binding</keyword>
<keyword id="KW-0347">Helicase</keyword>
<keyword id="KW-0378">Hydrolase</keyword>
<keyword id="KW-0547">Nucleotide-binding</keyword>
<keyword id="KW-0539">Nucleus</keyword>
<keyword id="KW-0779">Telomere</keyword>
<evidence type="ECO:0000250" key="1"/>
<evidence type="ECO:0000255" key="2">
    <source>
        <dbReference type="PROSITE-ProRule" id="PRU00186"/>
    </source>
</evidence>
<evidence type="ECO:0000256" key="3">
    <source>
        <dbReference type="SAM" id="MobiDB-lite"/>
    </source>
</evidence>
<evidence type="ECO:0000305" key="4"/>
<sequence length="655" mass="73640">MADEDQYRGDDQIDEEEEEIDESGYKTVKDAVLFAIEVSDSMLTPRPSSDSKKPAEESPTTAALKCAYHLMQQRIISNPRDMIGVLLYGTQASKFYDEDENSRGDLSYPHCYLFTDLDVPSAQEVKNLRALAQDGDESEDVLKASGERVSMANVLFCANQIFTSKAPNFLSRRLFIVTDNDDPHGDNKSLRSAATVRAKDLYDLGVTIELFPISRPDHEFDTARFYDDIIYKASPSDPDAPAYLQTDSKASPATGDGISLLSTLLSSINSRSVPRRAQFSNIPLELGPNFKISVSGYLLFKRQAPARNSFIWLGGEQPQIVKGVTTQIADDTARTIEKWEIKKAYKFGGDQVAFTPEEMKSLRNFGDPVIRIIGFKPLSALPFWANIKHPSFIYPSEEDFVGSTRVFSALHQTLLRDKKAALVWFIARKNASPVLGAMVAGEEKLDESGVQKFPPGMWIIPLPFADDVRQNPETTLHVAPEPLIDQMRYIVQQLQLPKASYDPFKYPNPSLQWHYRILQALALDEDLPEKPEDKTLPRYRQIDKRTGDYVLSWADELEKQYAKISAHGPKSTLVERSAKDRTSEVEDAAPKPYKKVKVETDEQGVEDVVRAPYQKGSLSKLTVPVLKNFLKAHGRSAAGKKKELVERVEEYLEQK</sequence>
<proteinExistence type="inferred from homology"/>
<organism>
    <name type="scientific">Aspergillus sojae</name>
    <dbReference type="NCBI Taxonomy" id="41058"/>
    <lineage>
        <taxon>Eukaryota</taxon>
        <taxon>Fungi</taxon>
        <taxon>Dikarya</taxon>
        <taxon>Ascomycota</taxon>
        <taxon>Pezizomycotina</taxon>
        <taxon>Eurotiomycetes</taxon>
        <taxon>Eurotiomycetidae</taxon>
        <taxon>Eurotiales</taxon>
        <taxon>Aspergillaceae</taxon>
        <taxon>Aspergillus</taxon>
        <taxon>Aspergillus subgen. Circumdati</taxon>
    </lineage>
</organism>
<accession>Q2MHH3</accession>
<reference key="1">
    <citation type="journal article" date="2006" name="Biosci. Biotechnol. Biochem.">
        <title>Identification and analysis of Ku70 and Ku80 homologs in the koji molds Aspergillus sojae and Aspergillus oryzae.</title>
        <authorList>
            <person name="Takahashi T."/>
            <person name="Masuda T."/>
            <person name="Koyama Y."/>
        </authorList>
    </citation>
    <scope>NUCLEOTIDE SEQUENCE [GENOMIC DNA]</scope>
    <source>
        <strain>ATCC 46250</strain>
    </source>
</reference>
<comment type="function">
    <text evidence="1">Single-stranded DNA-dependent ATP-dependent helicase. Involved in non-homologous end joining (NHEJ) DNA double strand break repair. DNA-binding is sequence-independent but has a high affinity to nicks in double-stranded DNA and to the ends of duplex DNA. Binds to naturally occurring chromosomal ends, and therefore provides chromosomal end protection. Required also for telomere recombination to repair telomeric ends in the absence of telomerase. ku70, of the ku70/ku80 heterodimer, binds to the stem loop of tlc1, the RNA component of telomerase. Involved in telomere maintenance. Interacts with telomeric repeats and subtelomeric sequences thereby controlling telomere length and protecting against subtelomeric rearrangement. Maintains telomeric chromatin, which is involved in silencing the expression of genes located at the telomere. Required for mating-type switching (By similarity).</text>
</comment>
<comment type="catalytic activity">
    <reaction>
        <text>ATP + H2O = ADP + phosphate + H(+)</text>
        <dbReference type="Rhea" id="RHEA:13065"/>
        <dbReference type="ChEBI" id="CHEBI:15377"/>
        <dbReference type="ChEBI" id="CHEBI:15378"/>
        <dbReference type="ChEBI" id="CHEBI:30616"/>
        <dbReference type="ChEBI" id="CHEBI:43474"/>
        <dbReference type="ChEBI" id="CHEBI:456216"/>
        <dbReference type="EC" id="3.6.4.12"/>
    </reaction>
</comment>
<comment type="subunit">
    <text evidence="1">Heterodimer of Ku70 and Ku80.</text>
</comment>
<comment type="subcellular location">
    <subcellularLocation>
        <location evidence="1">Nucleus</location>
    </subcellularLocation>
    <subcellularLocation>
        <location evidence="1">Chromosome</location>
        <location evidence="1">Telomere</location>
    </subcellularLocation>
</comment>
<comment type="similarity">
    <text evidence="4">Belongs to the ku70 family.</text>
</comment>
<protein>
    <recommendedName>
        <fullName>ATP-dependent DNA helicase II subunit 1</fullName>
        <ecNumber>3.6.4.12</ecNumber>
    </recommendedName>
    <alternativeName>
        <fullName>ATP-dependent DNA helicase II subunit Ku70</fullName>
    </alternativeName>
</protein>
<dbReference type="EC" id="3.6.4.12"/>
<dbReference type="EMBL" id="AB214650">
    <property type="protein sequence ID" value="BAE78502.1"/>
    <property type="molecule type" value="Genomic_DNA"/>
</dbReference>
<dbReference type="SMR" id="Q2MHH3"/>
<dbReference type="GO" id="GO:0000781">
    <property type="term" value="C:chromosome, telomeric region"/>
    <property type="evidence" value="ECO:0007669"/>
    <property type="project" value="UniProtKB-SubCell"/>
</dbReference>
<dbReference type="GO" id="GO:0043564">
    <property type="term" value="C:Ku70:Ku80 complex"/>
    <property type="evidence" value="ECO:0007669"/>
    <property type="project" value="InterPro"/>
</dbReference>
<dbReference type="GO" id="GO:0005524">
    <property type="term" value="F:ATP binding"/>
    <property type="evidence" value="ECO:0007669"/>
    <property type="project" value="UniProtKB-KW"/>
</dbReference>
<dbReference type="GO" id="GO:0016887">
    <property type="term" value="F:ATP hydrolysis activity"/>
    <property type="evidence" value="ECO:0007669"/>
    <property type="project" value="RHEA"/>
</dbReference>
<dbReference type="GO" id="GO:0003684">
    <property type="term" value="F:damaged DNA binding"/>
    <property type="evidence" value="ECO:0007669"/>
    <property type="project" value="InterPro"/>
</dbReference>
<dbReference type="GO" id="GO:0003678">
    <property type="term" value="F:DNA helicase activity"/>
    <property type="evidence" value="ECO:0007669"/>
    <property type="project" value="InterPro"/>
</dbReference>
<dbReference type="GO" id="GO:0003690">
    <property type="term" value="F:double-stranded DNA binding"/>
    <property type="evidence" value="ECO:0007669"/>
    <property type="project" value="TreeGrafter"/>
</dbReference>
<dbReference type="GO" id="GO:0042162">
    <property type="term" value="F:telomeric DNA binding"/>
    <property type="evidence" value="ECO:0007669"/>
    <property type="project" value="InterPro"/>
</dbReference>
<dbReference type="GO" id="GO:0006310">
    <property type="term" value="P:DNA recombination"/>
    <property type="evidence" value="ECO:0007669"/>
    <property type="project" value="UniProtKB-KW"/>
</dbReference>
<dbReference type="GO" id="GO:0006303">
    <property type="term" value="P:double-strand break repair via nonhomologous end joining"/>
    <property type="evidence" value="ECO:0007669"/>
    <property type="project" value="InterPro"/>
</dbReference>
<dbReference type="GO" id="GO:0000723">
    <property type="term" value="P:telomere maintenance"/>
    <property type="evidence" value="ECO:0007669"/>
    <property type="project" value="InterPro"/>
</dbReference>
<dbReference type="CDD" id="cd00788">
    <property type="entry name" value="KU70"/>
    <property type="match status" value="1"/>
</dbReference>
<dbReference type="CDD" id="cd01458">
    <property type="entry name" value="vWA_ku"/>
    <property type="match status" value="1"/>
</dbReference>
<dbReference type="FunFam" id="1.10.1600.10:FF:000004">
    <property type="entry name" value="ATP-dependent DNA helicase II subunit 1"/>
    <property type="match status" value="1"/>
</dbReference>
<dbReference type="FunFam" id="3.40.50.410:FF:000071">
    <property type="entry name" value="ATP-dependent DNA helicase II subunit 1"/>
    <property type="match status" value="1"/>
</dbReference>
<dbReference type="FunFam" id="4.10.970.10:FF:000003">
    <property type="entry name" value="ATP-dependent DNA helicase II subunit 1"/>
    <property type="match status" value="1"/>
</dbReference>
<dbReference type="FunFam" id="2.40.290.10:FF:000001">
    <property type="entry name" value="X-ray repair cross complementing 6"/>
    <property type="match status" value="1"/>
</dbReference>
<dbReference type="Gene3D" id="1.10.1600.10">
    <property type="match status" value="1"/>
</dbReference>
<dbReference type="Gene3D" id="2.40.290.10">
    <property type="match status" value="1"/>
</dbReference>
<dbReference type="Gene3D" id="4.10.970.10">
    <property type="entry name" value="Ku70, bridge and pillars"/>
    <property type="match status" value="1"/>
</dbReference>
<dbReference type="Gene3D" id="1.10.720.30">
    <property type="entry name" value="SAP domain"/>
    <property type="match status" value="1"/>
</dbReference>
<dbReference type="Gene3D" id="3.40.50.410">
    <property type="entry name" value="von Willebrand factor, type A domain"/>
    <property type="match status" value="1"/>
</dbReference>
<dbReference type="InterPro" id="IPR006165">
    <property type="entry name" value="Ku70"/>
</dbReference>
<dbReference type="InterPro" id="IPR006164">
    <property type="entry name" value="Ku70/Ku80_beta-barrel_dom"/>
</dbReference>
<dbReference type="InterPro" id="IPR027388">
    <property type="entry name" value="Ku70_bridge/pillars_dom_sf"/>
</dbReference>
<dbReference type="InterPro" id="IPR047087">
    <property type="entry name" value="KU70_core_dom"/>
</dbReference>
<dbReference type="InterPro" id="IPR005160">
    <property type="entry name" value="Ku_C"/>
</dbReference>
<dbReference type="InterPro" id="IPR005161">
    <property type="entry name" value="Ku_N"/>
</dbReference>
<dbReference type="InterPro" id="IPR003034">
    <property type="entry name" value="SAP_dom"/>
</dbReference>
<dbReference type="InterPro" id="IPR036361">
    <property type="entry name" value="SAP_dom_sf"/>
</dbReference>
<dbReference type="InterPro" id="IPR016194">
    <property type="entry name" value="SPOC-like_C_dom_sf"/>
</dbReference>
<dbReference type="InterPro" id="IPR036465">
    <property type="entry name" value="vWFA_dom_sf"/>
</dbReference>
<dbReference type="NCBIfam" id="TIGR00578">
    <property type="entry name" value="ku70"/>
    <property type="match status" value="1"/>
</dbReference>
<dbReference type="PANTHER" id="PTHR12604">
    <property type="entry name" value="KU AUTOANTIGEN DNA HELICASE"/>
    <property type="match status" value="1"/>
</dbReference>
<dbReference type="PANTHER" id="PTHR12604:SF2">
    <property type="entry name" value="X-RAY REPAIR CROSS-COMPLEMENTING PROTEIN 6"/>
    <property type="match status" value="1"/>
</dbReference>
<dbReference type="Pfam" id="PF02735">
    <property type="entry name" value="Ku"/>
    <property type="match status" value="1"/>
</dbReference>
<dbReference type="Pfam" id="PF03730">
    <property type="entry name" value="Ku_C"/>
    <property type="match status" value="1"/>
</dbReference>
<dbReference type="Pfam" id="PF03731">
    <property type="entry name" value="Ku_N"/>
    <property type="match status" value="1"/>
</dbReference>
<dbReference type="Pfam" id="PF02037">
    <property type="entry name" value="SAP"/>
    <property type="match status" value="1"/>
</dbReference>
<dbReference type="PIRSF" id="PIRSF003033">
    <property type="entry name" value="Ku70"/>
    <property type="match status" value="1"/>
</dbReference>
<dbReference type="SMART" id="SM00559">
    <property type="entry name" value="Ku78"/>
    <property type="match status" value="1"/>
</dbReference>
<dbReference type="SMART" id="SM00513">
    <property type="entry name" value="SAP"/>
    <property type="match status" value="1"/>
</dbReference>
<dbReference type="SUPFAM" id="SSF68906">
    <property type="entry name" value="SAP domain"/>
    <property type="match status" value="1"/>
</dbReference>
<dbReference type="SUPFAM" id="SSF100939">
    <property type="entry name" value="SPOC domain-like"/>
    <property type="match status" value="1"/>
</dbReference>
<dbReference type="SUPFAM" id="SSF53300">
    <property type="entry name" value="vWA-like"/>
    <property type="match status" value="1"/>
</dbReference>
<dbReference type="PROSITE" id="PS50800">
    <property type="entry name" value="SAP"/>
    <property type="match status" value="1"/>
</dbReference>
<feature type="chain" id="PRO_0000278339" description="ATP-dependent DNA helicase II subunit 1">
    <location>
        <begin position="1"/>
        <end position="655"/>
    </location>
</feature>
<feature type="domain" description="Ku">
    <location>
        <begin position="284"/>
        <end position="493"/>
    </location>
</feature>
<feature type="domain" description="SAP" evidence="2">
    <location>
        <begin position="618"/>
        <end position="652"/>
    </location>
</feature>
<feature type="region of interest" description="Disordered" evidence="3">
    <location>
        <begin position="1"/>
        <end position="26"/>
    </location>
</feature>
<feature type="region of interest" description="Disordered" evidence="3">
    <location>
        <begin position="568"/>
        <end position="589"/>
    </location>
</feature>
<feature type="compositionally biased region" description="Basic and acidic residues" evidence="3">
    <location>
        <begin position="1"/>
        <end position="11"/>
    </location>
</feature>
<feature type="compositionally biased region" description="Acidic residues" evidence="3">
    <location>
        <begin position="12"/>
        <end position="22"/>
    </location>
</feature>